<keyword id="KW-0472">Membrane</keyword>
<keyword id="KW-1185">Reference proteome</keyword>
<keyword id="KW-0812">Transmembrane</keyword>
<keyword id="KW-1133">Transmembrane helix</keyword>
<sequence>MAERPGPPGGAVSATAYPDTPAEFPPHLQAGAMRRRFWGVFNCLCAGSFGALAAASAKLAFGSEVSMGLCVLGIIVMASTNSLMWTFFSRGLSFSMSSAIASVTVTFSNILSSAFLGYVLYGECQEVLWWGGVFLILCGLTLIHRKLPPTWKPLPHKQQ</sequence>
<accession>Q5R7Q1</accession>
<name>TMM42_PONAB</name>
<evidence type="ECO:0000255" key="1"/>
<evidence type="ECO:0000305" key="2"/>
<dbReference type="EMBL" id="CR860061">
    <property type="protein sequence ID" value="CAH92209.1"/>
    <property type="molecule type" value="mRNA"/>
</dbReference>
<dbReference type="RefSeq" id="NP_001126292.1">
    <property type="nucleotide sequence ID" value="NM_001132820.1"/>
</dbReference>
<dbReference type="FunCoup" id="Q5R7Q1">
    <property type="interactions" value="41"/>
</dbReference>
<dbReference type="STRING" id="9601.ENSPPYP00000015605"/>
<dbReference type="Ensembl" id="ENSPPYT00000016226.2">
    <property type="protein sequence ID" value="ENSPPYP00000015605.2"/>
    <property type="gene ID" value="ENSPPYG00000013952.2"/>
</dbReference>
<dbReference type="GeneID" id="100173268"/>
<dbReference type="KEGG" id="pon:100173268"/>
<dbReference type="CTD" id="131616"/>
<dbReference type="eggNOG" id="ENOG502RY7R">
    <property type="taxonomic scope" value="Eukaryota"/>
</dbReference>
<dbReference type="GeneTree" id="ENSGT00940000164896"/>
<dbReference type="InParanoid" id="Q5R7Q1"/>
<dbReference type="OrthoDB" id="5854584at2759"/>
<dbReference type="Proteomes" id="UP000001595">
    <property type="component" value="Chromosome 3"/>
</dbReference>
<dbReference type="GO" id="GO:0016020">
    <property type="term" value="C:membrane"/>
    <property type="evidence" value="ECO:0007669"/>
    <property type="project" value="UniProtKB-SubCell"/>
</dbReference>
<dbReference type="InterPro" id="IPR039632">
    <property type="entry name" value="TMEM42"/>
</dbReference>
<dbReference type="PANTHER" id="PTHR31965">
    <property type="entry name" value="TRANSMEMBRANE PROTEIN 42"/>
    <property type="match status" value="1"/>
</dbReference>
<dbReference type="PANTHER" id="PTHR31965:SF1">
    <property type="entry name" value="TRANSMEMBRANE PROTEIN 42"/>
    <property type="match status" value="1"/>
</dbReference>
<dbReference type="SUPFAM" id="SSF103481">
    <property type="entry name" value="Multidrug resistance efflux transporter EmrE"/>
    <property type="match status" value="1"/>
</dbReference>
<feature type="chain" id="PRO_0000284497" description="Transmembrane protein 42">
    <location>
        <begin position="1"/>
        <end position="159"/>
    </location>
</feature>
<feature type="transmembrane region" description="Helical" evidence="1">
    <location>
        <begin position="37"/>
        <end position="57"/>
    </location>
</feature>
<feature type="transmembrane region" description="Helical" evidence="1">
    <location>
        <begin position="59"/>
        <end position="79"/>
    </location>
</feature>
<feature type="transmembrane region" description="Helical" evidence="1">
    <location>
        <begin position="100"/>
        <end position="120"/>
    </location>
</feature>
<feature type="transmembrane region" description="Helical" evidence="1">
    <location>
        <begin position="124"/>
        <end position="144"/>
    </location>
</feature>
<protein>
    <recommendedName>
        <fullName>Transmembrane protein 42</fullName>
    </recommendedName>
</protein>
<organism>
    <name type="scientific">Pongo abelii</name>
    <name type="common">Sumatran orangutan</name>
    <name type="synonym">Pongo pygmaeus abelii</name>
    <dbReference type="NCBI Taxonomy" id="9601"/>
    <lineage>
        <taxon>Eukaryota</taxon>
        <taxon>Metazoa</taxon>
        <taxon>Chordata</taxon>
        <taxon>Craniata</taxon>
        <taxon>Vertebrata</taxon>
        <taxon>Euteleostomi</taxon>
        <taxon>Mammalia</taxon>
        <taxon>Eutheria</taxon>
        <taxon>Euarchontoglires</taxon>
        <taxon>Primates</taxon>
        <taxon>Haplorrhini</taxon>
        <taxon>Catarrhini</taxon>
        <taxon>Hominidae</taxon>
        <taxon>Pongo</taxon>
    </lineage>
</organism>
<gene>
    <name type="primary">TMEM42</name>
</gene>
<proteinExistence type="evidence at transcript level"/>
<comment type="subcellular location">
    <subcellularLocation>
        <location evidence="2">Membrane</location>
        <topology evidence="2">Multi-pass membrane protein</topology>
    </subcellularLocation>
</comment>
<reference key="1">
    <citation type="submission" date="2004-11" db="EMBL/GenBank/DDBJ databases">
        <authorList>
            <consortium name="The German cDNA consortium"/>
        </authorList>
    </citation>
    <scope>NUCLEOTIDE SEQUENCE [LARGE SCALE MRNA]</scope>
    <source>
        <tissue>Kidney</tissue>
    </source>
</reference>